<sequence length="358" mass="38266">MTQLFPGPIVRTPGLAELDARARDIFRRVVESYLETGEPVGSRTISKGGVALSPASIRNTMQDLAQLGLLDAPHTSAGRMPTHAGLRMFVDGFLEVGDVAEQEKRAIEARLAVKGRSFEEALAEASSILSGLAGGAGIVVTPVREGGVKHVEFVPLGGGQVLAVMVFEDGQVENRLMRQAPGVTPSALQEASNFLNARLRGRTLTEARTEMGGELDAARRQLNETAARLVEDGLAAWSGGEGDARSLIVRGQANLLADARAREDIDRVRQLFDDLEQKGQLIGLLDDVRDAEGVRIYIGAETRLFSLSGSSVIAAPYMTGRQKVLGAIGVIGPARLNYARVIPLVDYTARVLGRMMDG</sequence>
<proteinExistence type="inferred from homology"/>
<evidence type="ECO:0000255" key="1">
    <source>
        <dbReference type="HAMAP-Rule" id="MF_00081"/>
    </source>
</evidence>
<keyword id="KW-1185">Reference proteome</keyword>
<keyword id="KW-0678">Repressor</keyword>
<keyword id="KW-0346">Stress response</keyword>
<keyword id="KW-0804">Transcription</keyword>
<keyword id="KW-0805">Transcription regulation</keyword>
<comment type="function">
    <text>Negative regulator of class I heat shock genes (grpE-dnaK-dnaJ and groELS operons). Prevents heat-shock induction of these operons.</text>
</comment>
<comment type="similarity">
    <text evidence="1">Belongs to the HrcA family.</text>
</comment>
<gene>
    <name evidence="1" type="primary">hrcA</name>
    <name type="ordered locus">CCNA_00152</name>
</gene>
<organism>
    <name type="scientific">Caulobacter vibrioides (strain NA1000 / CB15N)</name>
    <name type="common">Caulobacter crescentus</name>
    <dbReference type="NCBI Taxonomy" id="565050"/>
    <lineage>
        <taxon>Bacteria</taxon>
        <taxon>Pseudomonadati</taxon>
        <taxon>Pseudomonadota</taxon>
        <taxon>Alphaproteobacteria</taxon>
        <taxon>Caulobacterales</taxon>
        <taxon>Caulobacteraceae</taxon>
        <taxon>Caulobacter</taxon>
    </lineage>
</organism>
<dbReference type="EMBL" id="U33324">
    <property type="protein sequence ID" value="AAB01515.1"/>
    <property type="molecule type" value="Genomic_DNA"/>
</dbReference>
<dbReference type="EMBL" id="CP001340">
    <property type="protein sequence ID" value="ACL93619.1"/>
    <property type="molecule type" value="Genomic_DNA"/>
</dbReference>
<dbReference type="RefSeq" id="WP_012639892.1">
    <property type="nucleotide sequence ID" value="NC_011916.1"/>
</dbReference>
<dbReference type="RefSeq" id="YP_002515527.1">
    <property type="nucleotide sequence ID" value="NC_011916.1"/>
</dbReference>
<dbReference type="SMR" id="B8GXP3"/>
<dbReference type="GeneID" id="7332406"/>
<dbReference type="KEGG" id="ccs:CCNA_00152"/>
<dbReference type="PATRIC" id="fig|565050.3.peg.151"/>
<dbReference type="HOGENOM" id="CLU_050019_0_0_5"/>
<dbReference type="OrthoDB" id="9783139at2"/>
<dbReference type="PhylomeDB" id="B8GXP3"/>
<dbReference type="Proteomes" id="UP000001364">
    <property type="component" value="Chromosome"/>
</dbReference>
<dbReference type="GO" id="GO:0003677">
    <property type="term" value="F:DNA binding"/>
    <property type="evidence" value="ECO:0007669"/>
    <property type="project" value="InterPro"/>
</dbReference>
<dbReference type="GO" id="GO:0045892">
    <property type="term" value="P:negative regulation of DNA-templated transcription"/>
    <property type="evidence" value="ECO:0007669"/>
    <property type="project" value="UniProtKB-UniRule"/>
</dbReference>
<dbReference type="Gene3D" id="3.30.450.40">
    <property type="match status" value="1"/>
</dbReference>
<dbReference type="Gene3D" id="3.30.390.60">
    <property type="entry name" value="Heat-inducible transcription repressor hrca homolog, domain 3"/>
    <property type="match status" value="1"/>
</dbReference>
<dbReference type="Gene3D" id="1.10.10.10">
    <property type="entry name" value="Winged helix-like DNA-binding domain superfamily/Winged helix DNA-binding domain"/>
    <property type="match status" value="1"/>
</dbReference>
<dbReference type="HAMAP" id="MF_00081">
    <property type="entry name" value="HrcA"/>
    <property type="match status" value="1"/>
</dbReference>
<dbReference type="InterPro" id="IPR029016">
    <property type="entry name" value="GAF-like_dom_sf"/>
</dbReference>
<dbReference type="InterPro" id="IPR002571">
    <property type="entry name" value="HrcA"/>
</dbReference>
<dbReference type="InterPro" id="IPR021153">
    <property type="entry name" value="HrcA_C"/>
</dbReference>
<dbReference type="InterPro" id="IPR036388">
    <property type="entry name" value="WH-like_DNA-bd_sf"/>
</dbReference>
<dbReference type="InterPro" id="IPR036390">
    <property type="entry name" value="WH_DNA-bd_sf"/>
</dbReference>
<dbReference type="InterPro" id="IPR023120">
    <property type="entry name" value="WHTH_transcript_rep_HrcA_IDD"/>
</dbReference>
<dbReference type="NCBIfam" id="TIGR00331">
    <property type="entry name" value="hrcA"/>
    <property type="match status" value="1"/>
</dbReference>
<dbReference type="PANTHER" id="PTHR34824">
    <property type="entry name" value="HEAT-INDUCIBLE TRANSCRIPTION REPRESSOR HRCA"/>
    <property type="match status" value="1"/>
</dbReference>
<dbReference type="PANTHER" id="PTHR34824:SF1">
    <property type="entry name" value="HEAT-INDUCIBLE TRANSCRIPTION REPRESSOR HRCA"/>
    <property type="match status" value="1"/>
</dbReference>
<dbReference type="Pfam" id="PF01628">
    <property type="entry name" value="HrcA"/>
    <property type="match status" value="1"/>
</dbReference>
<dbReference type="PIRSF" id="PIRSF005485">
    <property type="entry name" value="HrcA"/>
    <property type="match status" value="1"/>
</dbReference>
<dbReference type="SUPFAM" id="SSF55781">
    <property type="entry name" value="GAF domain-like"/>
    <property type="match status" value="1"/>
</dbReference>
<dbReference type="SUPFAM" id="SSF46785">
    <property type="entry name" value="Winged helix' DNA-binding domain"/>
    <property type="match status" value="1"/>
</dbReference>
<name>HRCA_CAUVN</name>
<feature type="chain" id="PRO_0000378294" description="Heat-inducible transcription repressor HrcA">
    <location>
        <begin position="1"/>
        <end position="358"/>
    </location>
</feature>
<accession>B8GXP3</accession>
<accession>P54305</accession>
<reference key="1">
    <citation type="journal article" date="1996" name="J. Bacteriol.">
        <title>Identification of a Caulobacter crescentus operon encoding hrcA, involved in negatively regulating heat-inducible transcription, and the chaperone gene grpE.</title>
        <authorList>
            <person name="Roberts R.C."/>
            <person name="Toochinda C."/>
            <person name="Avedissian M."/>
            <person name="Baldini R.L."/>
            <person name="Gomes S.L."/>
            <person name="Shapiro L."/>
        </authorList>
    </citation>
    <scope>NUCLEOTIDE SEQUENCE [GENOMIC DNA]</scope>
</reference>
<reference key="2">
    <citation type="journal article" date="2010" name="J. Bacteriol.">
        <title>The genetic basis of laboratory adaptation in Caulobacter crescentus.</title>
        <authorList>
            <person name="Marks M.E."/>
            <person name="Castro-Rojas C.M."/>
            <person name="Teiling C."/>
            <person name="Du L."/>
            <person name="Kapatral V."/>
            <person name="Walunas T.L."/>
            <person name="Crosson S."/>
        </authorList>
    </citation>
    <scope>NUCLEOTIDE SEQUENCE [LARGE SCALE GENOMIC DNA]</scope>
    <source>
        <strain>NA1000 / CB15N</strain>
    </source>
</reference>
<protein>
    <recommendedName>
        <fullName evidence="1">Heat-inducible transcription repressor HrcA</fullName>
    </recommendedName>
</protein>